<keyword id="KW-0031">Aminopeptidase</keyword>
<keyword id="KW-0325">Glycoprotein</keyword>
<keyword id="KW-0378">Hydrolase</keyword>
<keyword id="KW-0472">Membrane</keyword>
<keyword id="KW-0645">Protease</keyword>
<keyword id="KW-1185">Reference proteome</keyword>
<keyword id="KW-0720">Serine protease</keyword>
<keyword id="KW-0735">Signal-anchor</keyword>
<keyword id="KW-0812">Transmembrane</keyword>
<keyword id="KW-1133">Transmembrane helix</keyword>
<keyword id="KW-0926">Vacuole</keyword>
<accession>O14073</accession>
<sequence>MNDFSFEDKGLISRSGFGSRHVRRVVKALALIFSLLILYLTISNVSDSPPKRDSLSLDDIVLQKYKPSYKQVNWIDSQGLKDTFLVKYGDLINIQDPYNLNKTLFSVSDLVYNGIQLDYDSYSISFDAKYVLVSVNKSQRWRHSSFAQYYLYNTETKDVNMLGQDNEHWTISLAEWSPTGHQLSFVYNNDLYVRKNDGNVQRLTYDGTVDVFNGLTDWIYEEEVLSSPSTIWWSPDSDKIAFLKLNESEIPTYHYPLYTAELDPSLPEFDYNKDMAIKYPKPGNPNPSVSLFVADLNSNASSNFSLWHNEPLAEPVVQNVLWVNTSSVLVQFTNRNSTCITARLLDTELKSIHTVKTECLEEGWYEVQQSAKMFPLNNSLVWENWSDGYFDILALDDYNHLAFIPFNGSSPIYLTSGAWDVTDGPIHIDGDFGNVYFLATLKDSTERHLYYVSLDTLEIYGITDNGEDEGYYSTSFSPFGDFYVLNYHGPDVPWQELRSTKDKDYCLSLETNSRLKQQLSSITLPSVEYGKLTFNDTTFNFMERRPRNFDVNKKYPVLFFAYGGPGSQQVAKLFRVDFQAYLASHPDFEFIVVTLDGRGTGFNGNAFRYSVSRHLGEWESYDQGQAGKFWADLPFVDENHVGIWGWSYGGYLTLKTLETQDVFSYGMAVAPVTDWRLYDSVYTERYMDLPQYNKEGYKNSQIHDYEKFKQLKRFFVAHGTGDDNVHFQHSMHLMDGLNLANCYNYDMAVFPDSAHSISYHNASLSIYHRLSEWIGDALGRIDPSTGVRQHRWD</sequence>
<comment type="subcellular location">
    <subcellularLocation>
        <location evidence="1">Vacuole membrane</location>
        <topology evidence="1">Single-pass type II membrane protein</topology>
    </subcellularLocation>
    <text evidence="1">Lysosome-like vacuoles.</text>
</comment>
<comment type="similarity">
    <text evidence="4">Belongs to the peptidase S9B family.</text>
</comment>
<name>YEA8_SCHPO</name>
<dbReference type="EC" id="3.4.14.-"/>
<dbReference type="EMBL" id="CU329670">
    <property type="protein sequence ID" value="CAA20138.1"/>
    <property type="molecule type" value="Genomic_DNA"/>
</dbReference>
<dbReference type="PIR" id="T41703">
    <property type="entry name" value="T41703"/>
</dbReference>
<dbReference type="SMR" id="O14073"/>
<dbReference type="BioGRID" id="278879">
    <property type="interactions" value="2"/>
</dbReference>
<dbReference type="FunCoup" id="O14073">
    <property type="interactions" value="145"/>
</dbReference>
<dbReference type="STRING" id="284812.O14073"/>
<dbReference type="ESTHER" id="schpo-C2E11.08">
    <property type="family name" value="DPP4N_Peptidase_S9"/>
</dbReference>
<dbReference type="MEROPS" id="S09.006"/>
<dbReference type="iPTMnet" id="O14073"/>
<dbReference type="PaxDb" id="4896-SPACUNK4.08.1"/>
<dbReference type="EnsemblFungi" id="SPACUNK4.08.1">
    <property type="protein sequence ID" value="SPACUNK4.08.1:pep"/>
    <property type="gene ID" value="SPACUNK4.08"/>
</dbReference>
<dbReference type="KEGG" id="spo:2542415"/>
<dbReference type="PomBase" id="SPACUNK4.08"/>
<dbReference type="VEuPathDB" id="FungiDB:SPACUNK4.08"/>
<dbReference type="eggNOG" id="KOG2100">
    <property type="taxonomic scope" value="Eukaryota"/>
</dbReference>
<dbReference type="HOGENOM" id="CLU_006105_0_1_1"/>
<dbReference type="InParanoid" id="O14073"/>
<dbReference type="OMA" id="YDVYDIA"/>
<dbReference type="PhylomeDB" id="O14073"/>
<dbReference type="PRO" id="PR:O14073"/>
<dbReference type="Proteomes" id="UP000002485">
    <property type="component" value="Chromosome I"/>
</dbReference>
<dbReference type="GO" id="GO:0005886">
    <property type="term" value="C:plasma membrane"/>
    <property type="evidence" value="ECO:0000318"/>
    <property type="project" value="GO_Central"/>
</dbReference>
<dbReference type="GO" id="GO:0005774">
    <property type="term" value="C:vacuolar membrane"/>
    <property type="evidence" value="ECO:0007669"/>
    <property type="project" value="UniProtKB-SubCell"/>
</dbReference>
<dbReference type="GO" id="GO:0004177">
    <property type="term" value="F:aminopeptidase activity"/>
    <property type="evidence" value="ECO:0007669"/>
    <property type="project" value="UniProtKB-KW"/>
</dbReference>
<dbReference type="GO" id="GO:0008239">
    <property type="term" value="F:dipeptidyl-peptidase activity"/>
    <property type="evidence" value="ECO:0000318"/>
    <property type="project" value="GO_Central"/>
</dbReference>
<dbReference type="GO" id="GO:0004252">
    <property type="term" value="F:serine-type endopeptidase activity"/>
    <property type="evidence" value="ECO:0007669"/>
    <property type="project" value="InterPro"/>
</dbReference>
<dbReference type="GO" id="GO:0016485">
    <property type="term" value="P:protein processing"/>
    <property type="evidence" value="ECO:0000266"/>
    <property type="project" value="PomBase"/>
</dbReference>
<dbReference type="GO" id="GO:0006508">
    <property type="term" value="P:proteolysis"/>
    <property type="evidence" value="ECO:0000318"/>
    <property type="project" value="GO_Central"/>
</dbReference>
<dbReference type="FunFam" id="3.40.50.1820:FF:000003">
    <property type="entry name" value="Dipeptidyl peptidase 4"/>
    <property type="match status" value="1"/>
</dbReference>
<dbReference type="Gene3D" id="3.40.50.1820">
    <property type="entry name" value="alpha/beta hydrolase"/>
    <property type="match status" value="1"/>
</dbReference>
<dbReference type="Gene3D" id="2.140.10.30">
    <property type="entry name" value="Dipeptidylpeptidase IV, N-terminal domain"/>
    <property type="match status" value="1"/>
</dbReference>
<dbReference type="InterPro" id="IPR029058">
    <property type="entry name" value="AB_hydrolase_fold"/>
</dbReference>
<dbReference type="InterPro" id="IPR002471">
    <property type="entry name" value="Pept_S9_AS"/>
</dbReference>
<dbReference type="InterPro" id="IPR001375">
    <property type="entry name" value="Peptidase_S9_cat"/>
</dbReference>
<dbReference type="InterPro" id="IPR002469">
    <property type="entry name" value="Peptidase_S9B_N"/>
</dbReference>
<dbReference type="InterPro" id="IPR050278">
    <property type="entry name" value="Serine_Prot_S9B/DPPIV"/>
</dbReference>
<dbReference type="PANTHER" id="PTHR11731:SF200">
    <property type="entry name" value="DIPEPTIDYL PEPTIDASE 10, ISOFORM B"/>
    <property type="match status" value="1"/>
</dbReference>
<dbReference type="PANTHER" id="PTHR11731">
    <property type="entry name" value="PROTEASE FAMILY S9B,C DIPEPTIDYL-PEPTIDASE IV-RELATED"/>
    <property type="match status" value="1"/>
</dbReference>
<dbReference type="Pfam" id="PF00930">
    <property type="entry name" value="DPPIV_N"/>
    <property type="match status" value="1"/>
</dbReference>
<dbReference type="Pfam" id="PF00326">
    <property type="entry name" value="Peptidase_S9"/>
    <property type="match status" value="1"/>
</dbReference>
<dbReference type="SUPFAM" id="SSF53474">
    <property type="entry name" value="alpha/beta-Hydrolases"/>
    <property type="match status" value="1"/>
</dbReference>
<dbReference type="SUPFAM" id="SSF82171">
    <property type="entry name" value="DPP6 N-terminal domain-like"/>
    <property type="match status" value="1"/>
</dbReference>
<dbReference type="PROSITE" id="PS00708">
    <property type="entry name" value="PRO_ENDOPEP_SER"/>
    <property type="match status" value="1"/>
</dbReference>
<organism>
    <name type="scientific">Schizosaccharomyces pombe (strain 972 / ATCC 24843)</name>
    <name type="common">Fission yeast</name>
    <dbReference type="NCBI Taxonomy" id="284812"/>
    <lineage>
        <taxon>Eukaryota</taxon>
        <taxon>Fungi</taxon>
        <taxon>Dikarya</taxon>
        <taxon>Ascomycota</taxon>
        <taxon>Taphrinomycotina</taxon>
        <taxon>Schizosaccharomycetes</taxon>
        <taxon>Schizosaccharomycetales</taxon>
        <taxon>Schizosaccharomycetaceae</taxon>
        <taxon>Schizosaccharomyces</taxon>
    </lineage>
</organism>
<feature type="chain" id="PRO_0000122422" description="Putative dipeptidyl aminopeptidase C2E11.08">
    <location>
        <begin position="1"/>
        <end position="793"/>
    </location>
</feature>
<feature type="topological domain" description="Cytoplasmic" evidence="2">
    <location>
        <begin position="1"/>
        <end position="24"/>
    </location>
</feature>
<feature type="transmembrane region" description="Helical; Signal-anchor for type II membrane protein" evidence="2">
    <location>
        <begin position="25"/>
        <end position="45"/>
    </location>
</feature>
<feature type="topological domain" description="Lumenal" evidence="2">
    <location>
        <begin position="46"/>
        <end position="793"/>
    </location>
</feature>
<feature type="active site" description="Charge relay system" evidence="3">
    <location>
        <position position="647"/>
    </location>
</feature>
<feature type="active site" description="Charge relay system" evidence="3">
    <location>
        <position position="722"/>
    </location>
</feature>
<feature type="active site" description="Charge relay system" evidence="3">
    <location>
        <position position="755"/>
    </location>
</feature>
<feature type="glycosylation site" description="N-linked (GlcNAc...) asparagine" evidence="2">
    <location>
        <position position="101"/>
    </location>
</feature>
<feature type="glycosylation site" description="N-linked (GlcNAc...) asparagine" evidence="2">
    <location>
        <position position="136"/>
    </location>
</feature>
<feature type="glycosylation site" description="N-linked (GlcNAc...) asparagine" evidence="2">
    <location>
        <position position="246"/>
    </location>
</feature>
<feature type="glycosylation site" description="N-linked (GlcNAc...) asparagine" evidence="2">
    <location>
        <position position="299"/>
    </location>
</feature>
<feature type="glycosylation site" description="N-linked (GlcNAc...) asparagine" evidence="2">
    <location>
        <position position="303"/>
    </location>
</feature>
<feature type="glycosylation site" description="N-linked (GlcNAc...) asparagine" evidence="2">
    <location>
        <position position="324"/>
    </location>
</feature>
<feature type="glycosylation site" description="N-linked (GlcNAc...) asparagine" evidence="2">
    <location>
        <position position="336"/>
    </location>
</feature>
<feature type="glycosylation site" description="N-linked (GlcNAc...) asparagine" evidence="2">
    <location>
        <position position="377"/>
    </location>
</feature>
<feature type="glycosylation site" description="N-linked (GlcNAc...) asparagine" evidence="2">
    <location>
        <position position="384"/>
    </location>
</feature>
<feature type="glycosylation site" description="N-linked (GlcNAc...) asparagine" evidence="2">
    <location>
        <position position="407"/>
    </location>
</feature>
<feature type="glycosylation site" description="N-linked (GlcNAc...) asparagine" evidence="2">
    <location>
        <position position="535"/>
    </location>
</feature>
<feature type="glycosylation site" description="N-linked (GlcNAc...) asparagine" evidence="2">
    <location>
        <position position="761"/>
    </location>
</feature>
<protein>
    <recommendedName>
        <fullName>Putative dipeptidyl aminopeptidase C2E11.08</fullName>
        <ecNumber>3.4.14.-</ecNumber>
    </recommendedName>
</protein>
<reference key="1">
    <citation type="journal article" date="2002" name="Nature">
        <title>The genome sequence of Schizosaccharomyces pombe.</title>
        <authorList>
            <person name="Wood V."/>
            <person name="Gwilliam R."/>
            <person name="Rajandream M.A."/>
            <person name="Lyne M.H."/>
            <person name="Lyne R."/>
            <person name="Stewart A."/>
            <person name="Sgouros J.G."/>
            <person name="Peat N."/>
            <person name="Hayles J."/>
            <person name="Baker S.G."/>
            <person name="Basham D."/>
            <person name="Bowman S."/>
            <person name="Brooks K."/>
            <person name="Brown D."/>
            <person name="Brown S."/>
            <person name="Chillingworth T."/>
            <person name="Churcher C.M."/>
            <person name="Collins M."/>
            <person name="Connor R."/>
            <person name="Cronin A."/>
            <person name="Davis P."/>
            <person name="Feltwell T."/>
            <person name="Fraser A."/>
            <person name="Gentles S."/>
            <person name="Goble A."/>
            <person name="Hamlin N."/>
            <person name="Harris D.E."/>
            <person name="Hidalgo J."/>
            <person name="Hodgson G."/>
            <person name="Holroyd S."/>
            <person name="Hornsby T."/>
            <person name="Howarth S."/>
            <person name="Huckle E.J."/>
            <person name="Hunt S."/>
            <person name="Jagels K."/>
            <person name="James K.D."/>
            <person name="Jones L."/>
            <person name="Jones M."/>
            <person name="Leather S."/>
            <person name="McDonald S."/>
            <person name="McLean J."/>
            <person name="Mooney P."/>
            <person name="Moule S."/>
            <person name="Mungall K.L."/>
            <person name="Murphy L.D."/>
            <person name="Niblett D."/>
            <person name="Odell C."/>
            <person name="Oliver K."/>
            <person name="O'Neil S."/>
            <person name="Pearson D."/>
            <person name="Quail M.A."/>
            <person name="Rabbinowitsch E."/>
            <person name="Rutherford K.M."/>
            <person name="Rutter S."/>
            <person name="Saunders D."/>
            <person name="Seeger K."/>
            <person name="Sharp S."/>
            <person name="Skelton J."/>
            <person name="Simmonds M.N."/>
            <person name="Squares R."/>
            <person name="Squares S."/>
            <person name="Stevens K."/>
            <person name="Taylor K."/>
            <person name="Taylor R.G."/>
            <person name="Tivey A."/>
            <person name="Walsh S.V."/>
            <person name="Warren T."/>
            <person name="Whitehead S."/>
            <person name="Woodward J.R."/>
            <person name="Volckaert G."/>
            <person name="Aert R."/>
            <person name="Robben J."/>
            <person name="Grymonprez B."/>
            <person name="Weltjens I."/>
            <person name="Vanstreels E."/>
            <person name="Rieger M."/>
            <person name="Schaefer M."/>
            <person name="Mueller-Auer S."/>
            <person name="Gabel C."/>
            <person name="Fuchs M."/>
            <person name="Duesterhoeft A."/>
            <person name="Fritzc C."/>
            <person name="Holzer E."/>
            <person name="Moestl D."/>
            <person name="Hilbert H."/>
            <person name="Borzym K."/>
            <person name="Langer I."/>
            <person name="Beck A."/>
            <person name="Lehrach H."/>
            <person name="Reinhardt R."/>
            <person name="Pohl T.M."/>
            <person name="Eger P."/>
            <person name="Zimmermann W."/>
            <person name="Wedler H."/>
            <person name="Wambutt R."/>
            <person name="Purnelle B."/>
            <person name="Goffeau A."/>
            <person name="Cadieu E."/>
            <person name="Dreano S."/>
            <person name="Gloux S."/>
            <person name="Lelaure V."/>
            <person name="Mottier S."/>
            <person name="Galibert F."/>
            <person name="Aves S.J."/>
            <person name="Xiang Z."/>
            <person name="Hunt C."/>
            <person name="Moore K."/>
            <person name="Hurst S.M."/>
            <person name="Lucas M."/>
            <person name="Rochet M."/>
            <person name="Gaillardin C."/>
            <person name="Tallada V.A."/>
            <person name="Garzon A."/>
            <person name="Thode G."/>
            <person name="Daga R.R."/>
            <person name="Cruzado L."/>
            <person name="Jimenez J."/>
            <person name="Sanchez M."/>
            <person name="del Rey F."/>
            <person name="Benito J."/>
            <person name="Dominguez A."/>
            <person name="Revuelta J.L."/>
            <person name="Moreno S."/>
            <person name="Armstrong J."/>
            <person name="Forsburg S.L."/>
            <person name="Cerutti L."/>
            <person name="Lowe T."/>
            <person name="McCombie W.R."/>
            <person name="Paulsen I."/>
            <person name="Potashkin J."/>
            <person name="Shpakovski G.V."/>
            <person name="Ussery D."/>
            <person name="Barrell B.G."/>
            <person name="Nurse P."/>
        </authorList>
    </citation>
    <scope>NUCLEOTIDE SEQUENCE [LARGE SCALE GENOMIC DNA]</scope>
    <source>
        <strain>972 / ATCC 24843</strain>
    </source>
</reference>
<gene>
    <name type="ORF">SPAC2E11.08</name>
    <name type="ORF">SPACUNK4.08</name>
</gene>
<proteinExistence type="inferred from homology"/>
<evidence type="ECO:0000250" key="1"/>
<evidence type="ECO:0000255" key="2"/>
<evidence type="ECO:0000255" key="3">
    <source>
        <dbReference type="PROSITE-ProRule" id="PRU10084"/>
    </source>
</evidence>
<evidence type="ECO:0000305" key="4"/>